<feature type="initiator methionine" description="Removed" evidence="25 44">
    <location>
        <position position="1"/>
    </location>
</feature>
<feature type="chain" id="PRO_0000121056" description="Ras-related protein Rab-1A">
    <location>
        <begin position="2"/>
        <end position="205"/>
    </location>
</feature>
<feature type="region of interest" description="Disordered" evidence="4">
    <location>
        <begin position="178"/>
        <end position="205"/>
    </location>
</feature>
<feature type="short sequence motif" description="Switch 1" evidence="13 36 37">
    <location>
        <begin position="34"/>
        <end position="48"/>
    </location>
</feature>
<feature type="short sequence motif" description="Switch 2" evidence="13 36 37">
    <location>
        <begin position="66"/>
        <end position="83"/>
    </location>
</feature>
<feature type="binding site" evidence="13 37">
    <location>
        <position position="20"/>
    </location>
    <ligand>
        <name>GTP</name>
        <dbReference type="ChEBI" id="CHEBI:37565"/>
    </ligand>
</feature>
<feature type="binding site" evidence="13 37">
    <location>
        <position position="21"/>
    </location>
    <ligand>
        <name>GTP</name>
        <dbReference type="ChEBI" id="CHEBI:37565"/>
    </ligand>
</feature>
<feature type="binding site" evidence="13 37">
    <location>
        <position position="23"/>
    </location>
    <ligand>
        <name>GTP</name>
        <dbReference type="ChEBI" id="CHEBI:37565"/>
    </ligand>
</feature>
<feature type="binding site" evidence="13 37">
    <location>
        <position position="24"/>
    </location>
    <ligand>
        <name>GTP</name>
        <dbReference type="ChEBI" id="CHEBI:37565"/>
    </ligand>
</feature>
<feature type="binding site" evidence="13 37">
    <location>
        <position position="25"/>
    </location>
    <ligand>
        <name>GTP</name>
        <dbReference type="ChEBI" id="CHEBI:37565"/>
    </ligand>
</feature>
<feature type="binding site" evidence="13 14 15 17 24 33 37 38 39 40 41 42 43">
    <location>
        <position position="25"/>
    </location>
    <ligand>
        <name>Mg(2+)</name>
        <dbReference type="ChEBI" id="CHEBI:18420"/>
    </ligand>
</feature>
<feature type="binding site" evidence="13 37">
    <location>
        <position position="26"/>
    </location>
    <ligand>
        <name>GTP</name>
        <dbReference type="ChEBI" id="CHEBI:37565"/>
    </ligand>
</feature>
<feature type="binding site" evidence="13 37">
    <location>
        <position position="38"/>
    </location>
    <ligand>
        <name>GTP</name>
        <dbReference type="ChEBI" id="CHEBI:37565"/>
    </ligand>
</feature>
<feature type="binding site" evidence="13 37">
    <location>
        <position position="43"/>
    </location>
    <ligand>
        <name>GTP</name>
        <dbReference type="ChEBI" id="CHEBI:37565"/>
    </ligand>
</feature>
<feature type="binding site" evidence="13 14 15 17 24 37 38 39 40 41 42 43">
    <location>
        <position position="43"/>
    </location>
    <ligand>
        <name>Mg(2+)</name>
        <dbReference type="ChEBI" id="CHEBI:18420"/>
    </ligand>
</feature>
<feature type="binding site" evidence="13 14 15 24 37 38 39 40 41 43">
    <location>
        <position position="66"/>
    </location>
    <ligand>
        <name>Mg(2+)</name>
        <dbReference type="ChEBI" id="CHEBI:18420"/>
    </ligand>
</feature>
<feature type="binding site" evidence="13 37">
    <location>
        <position position="69"/>
    </location>
    <ligand>
        <name>GTP</name>
        <dbReference type="ChEBI" id="CHEBI:37565"/>
    </ligand>
</feature>
<feature type="binding site" evidence="13 37">
    <location>
        <position position="124"/>
    </location>
    <ligand>
        <name>GTP</name>
        <dbReference type="ChEBI" id="CHEBI:37565"/>
    </ligand>
</feature>
<feature type="binding site" evidence="13 37">
    <location>
        <position position="125"/>
    </location>
    <ligand>
        <name>GTP</name>
        <dbReference type="ChEBI" id="CHEBI:37565"/>
    </ligand>
</feature>
<feature type="binding site" evidence="13 37">
    <location>
        <position position="127"/>
    </location>
    <ligand>
        <name>GTP</name>
        <dbReference type="ChEBI" id="CHEBI:37565"/>
    </ligand>
</feature>
<feature type="binding site" evidence="13 37">
    <location>
        <position position="155"/>
    </location>
    <ligand>
        <name>GTP</name>
        <dbReference type="ChEBI" id="CHEBI:37565"/>
    </ligand>
</feature>
<feature type="binding site" evidence="13 37">
    <location>
        <position position="156"/>
    </location>
    <ligand>
        <name>GTP</name>
        <dbReference type="ChEBI" id="CHEBI:37565"/>
    </ligand>
</feature>
<feature type="modified residue" description="N-acetylserine" evidence="25 44">
    <location>
        <position position="2"/>
    </location>
</feature>
<feature type="modified residue" description="(Microbial infection) O-(2-cholinephosphoryl)serine" evidence="11 12">
    <location>
        <position position="79"/>
    </location>
</feature>
<feature type="modified residue" description="Phosphoserine; by CDK1" evidence="30">
    <location>
        <position position="194"/>
    </location>
</feature>
<feature type="lipid moiety-binding region" description="S-geranylgeranyl cysteine" evidence="23">
    <location>
        <position position="204"/>
    </location>
</feature>
<feature type="lipid moiety-binding region" description="S-geranylgeranyl cysteine" evidence="23">
    <location>
        <position position="205"/>
    </location>
</feature>
<feature type="glycosylation site" description="(Microbial infection) N-beta-linked (GlcNAc) arginine" evidence="20">
    <location>
        <position position="72"/>
    </location>
</feature>
<feature type="glycosylation site" description="(Microbial infection) N-beta-linked (GlcNAc) arginine" evidence="20 21">
    <location>
        <position position="74"/>
    </location>
</feature>
<feature type="glycosylation site" description="(Microbial infection) N-beta-linked (GlcNAc) arginine" evidence="20 21">
    <location>
        <position position="82"/>
    </location>
</feature>
<feature type="glycosylation site" description="(Microbial infection) N-beta-linked (GlcNAc) arginine" evidence="20 21">
    <location>
        <position position="111"/>
    </location>
</feature>
<feature type="cross-link" description="Glycyl lysine isopeptide (Lys-Gly) (interchain with G-Cter in ubiquitin)" evidence="1">
    <location>
        <position position="49"/>
    </location>
</feature>
<feature type="cross-link" description="Glycyl lysine isopeptide (Lys-Gly) (interchain with G-Cter in ubiquitin)" evidence="1">
    <location>
        <position position="61"/>
    </location>
</feature>
<feature type="splice variant" id="VSP_005525" description="In isoform 2." evidence="27">
    <location>
        <begin position="33"/>
        <end position="96"/>
    </location>
</feature>
<feature type="splice variant" id="VSP_005526" description="In isoform 3." evidence="26 28">
    <location>
        <begin position="65"/>
        <end position="140"/>
    </location>
</feature>
<feature type="mutagenesis site" description="Promotes TLRs trafficking and TLRs-mediated signaling; when associated with A-61." evidence="22">
    <original>K</original>
    <variation>R</variation>
    <location>
        <position position="49"/>
    </location>
</feature>
<feature type="mutagenesis site" description="Promotes TLRs trafficking and TLRs-mediated signaling; when associated with A-49." evidence="22">
    <original>K</original>
    <variation>R</variation>
    <location>
        <position position="61"/>
    </location>
</feature>
<feature type="mutagenesis site" description="Abolished arginine GlcNAcylation; when associated with A-82 and A-111." evidence="20">
    <original>RFR</original>
    <variation>AFA</variation>
    <location>
        <begin position="72"/>
        <end position="74"/>
    </location>
</feature>
<feature type="mutagenesis site" description="Abolished arginine GlcNAcylation; when associated with A-82 and A-111." evidence="21">
    <original>R</original>
    <variation>A</variation>
    <location>
        <position position="74"/>
    </location>
</feature>
<feature type="mutagenesis site" description="Abolished arginine GlcNAcylation; when associated with A-74 and A-111. Abolished arginine GlcNAcylation; when associated with 72-A--A-74 and A-111." evidence="20 21">
    <original>R</original>
    <variation>A</variation>
    <location>
        <position position="82"/>
    </location>
</feature>
<feature type="mutagenesis site" description="Abolished arginine GlcNAcylation; when associated with A-74 and A-82. Abolished arginine GlcNAcylation; when associated with 72-A--A-74 and A-82." evidence="20 21">
    <original>R</original>
    <variation>A</variation>
    <location>
        <position position="111"/>
    </location>
</feature>
<feature type="mutagenesis site" description="Dominant negative mutant. Strongly reduces the levels of CASR present at the cell-surface." evidence="9">
    <original>N</original>
    <variation>I</variation>
    <location>
        <position position="124"/>
    </location>
</feature>
<feature type="strand" evidence="45">
    <location>
        <begin position="10"/>
        <end position="17"/>
    </location>
</feature>
<feature type="helix" evidence="45">
    <location>
        <begin position="24"/>
        <end position="28"/>
    </location>
</feature>
<feature type="strand" evidence="46">
    <location>
        <begin position="30"/>
        <end position="32"/>
    </location>
</feature>
<feature type="helix" evidence="45">
    <location>
        <begin position="39"/>
        <end position="44"/>
    </location>
</feature>
<feature type="strand" evidence="45">
    <location>
        <begin position="47"/>
        <end position="55"/>
    </location>
</feature>
<feature type="strand" evidence="45">
    <location>
        <begin position="58"/>
        <end position="65"/>
    </location>
</feature>
<feature type="helix" evidence="45">
    <location>
        <begin position="70"/>
        <end position="72"/>
    </location>
</feature>
<feature type="helix" evidence="45">
    <location>
        <begin position="78"/>
        <end position="80"/>
    </location>
</feature>
<feature type="turn" evidence="47">
    <location>
        <begin position="81"/>
        <end position="83"/>
    </location>
</feature>
<feature type="strand" evidence="45">
    <location>
        <begin position="85"/>
        <end position="92"/>
    </location>
</feature>
<feature type="helix" evidence="45">
    <location>
        <begin position="96"/>
        <end position="112"/>
    </location>
</feature>
<feature type="strand" evidence="45">
    <location>
        <begin position="117"/>
        <end position="125"/>
    </location>
</feature>
<feature type="helix" evidence="48">
    <location>
        <begin position="129"/>
        <end position="131"/>
    </location>
</feature>
<feature type="helix" evidence="45">
    <location>
        <begin position="136"/>
        <end position="145"/>
    </location>
</feature>
<feature type="strand" evidence="45">
    <location>
        <begin position="150"/>
        <end position="154"/>
    </location>
</feature>
<feature type="turn" evidence="48">
    <location>
        <begin position="155"/>
        <end position="158"/>
    </location>
</feature>
<feature type="helix" evidence="45">
    <location>
        <begin position="159"/>
        <end position="175"/>
    </location>
</feature>
<evidence type="ECO:0000250" key="1">
    <source>
        <dbReference type="UniProtKB" id="P51153"/>
    </source>
</evidence>
<evidence type="ECO:0000250" key="2">
    <source>
        <dbReference type="UniProtKB" id="P62821"/>
    </source>
</evidence>
<evidence type="ECO:0000250" key="3">
    <source>
        <dbReference type="UniProtKB" id="P62822"/>
    </source>
</evidence>
<evidence type="ECO:0000256" key="4">
    <source>
        <dbReference type="SAM" id="MobiDB-lite"/>
    </source>
</evidence>
<evidence type="ECO:0000269" key="5">
    <source>
    </source>
</evidence>
<evidence type="ECO:0000269" key="6">
    <source>
    </source>
</evidence>
<evidence type="ECO:0000269" key="7">
    <source>
    </source>
</evidence>
<evidence type="ECO:0000269" key="8">
    <source>
    </source>
</evidence>
<evidence type="ECO:0000269" key="9">
    <source>
    </source>
</evidence>
<evidence type="ECO:0000269" key="10">
    <source>
    </source>
</evidence>
<evidence type="ECO:0000269" key="11">
    <source>
    </source>
</evidence>
<evidence type="ECO:0000269" key="12">
    <source>
    </source>
</evidence>
<evidence type="ECO:0000269" key="13">
    <source>
    </source>
</evidence>
<evidence type="ECO:0000269" key="14">
    <source>
    </source>
</evidence>
<evidence type="ECO:0000269" key="15">
    <source>
    </source>
</evidence>
<evidence type="ECO:0000269" key="16">
    <source>
    </source>
</evidence>
<evidence type="ECO:0000269" key="17">
    <source>
    </source>
</evidence>
<evidence type="ECO:0000269" key="18">
    <source>
    </source>
</evidence>
<evidence type="ECO:0000269" key="19">
    <source>
    </source>
</evidence>
<evidence type="ECO:0000269" key="20">
    <source>
    </source>
</evidence>
<evidence type="ECO:0000269" key="21">
    <source>
    </source>
</evidence>
<evidence type="ECO:0000269" key="22">
    <source>
    </source>
</evidence>
<evidence type="ECO:0000269" key="23">
    <source>
    </source>
</evidence>
<evidence type="ECO:0000269" key="24">
    <source ref="29"/>
</evidence>
<evidence type="ECO:0000269" key="25">
    <source ref="9"/>
</evidence>
<evidence type="ECO:0000303" key="26">
    <source>
    </source>
</evidence>
<evidence type="ECO:0000303" key="27">
    <source>
    </source>
</evidence>
<evidence type="ECO:0000303" key="28">
    <source ref="6"/>
</evidence>
<evidence type="ECO:0000305" key="29"/>
<evidence type="ECO:0000305" key="30">
    <source>
    </source>
</evidence>
<evidence type="ECO:0000305" key="31">
    <source>
    </source>
</evidence>
<evidence type="ECO:0000305" key="32">
    <source>
    </source>
</evidence>
<evidence type="ECO:0007744" key="33">
    <source>
        <dbReference type="PDB" id="2FOL"/>
    </source>
</evidence>
<evidence type="ECO:0007744" key="34">
    <source>
        <dbReference type="PDB" id="2WWX"/>
    </source>
</evidence>
<evidence type="ECO:0007744" key="35">
    <source>
        <dbReference type="PDB" id="3L0I"/>
    </source>
</evidence>
<evidence type="ECO:0007744" key="36">
    <source>
        <dbReference type="PDB" id="3SFV"/>
    </source>
</evidence>
<evidence type="ECO:0007744" key="37">
    <source>
        <dbReference type="PDB" id="3TKL"/>
    </source>
</evidence>
<evidence type="ECO:0007744" key="38">
    <source>
        <dbReference type="PDB" id="4FMB"/>
    </source>
</evidence>
<evidence type="ECO:0007744" key="39">
    <source>
        <dbReference type="PDB" id="4FMC"/>
    </source>
</evidence>
<evidence type="ECO:0007744" key="40">
    <source>
        <dbReference type="PDB" id="4FMD"/>
    </source>
</evidence>
<evidence type="ECO:0007744" key="41">
    <source>
        <dbReference type="PDB" id="4FME"/>
    </source>
</evidence>
<evidence type="ECO:0007744" key="42">
    <source>
        <dbReference type="PDB" id="4IRU"/>
    </source>
</evidence>
<evidence type="ECO:0007744" key="43">
    <source>
        <dbReference type="PDB" id="4JVS"/>
    </source>
</evidence>
<evidence type="ECO:0007744" key="44">
    <source>
    </source>
</evidence>
<evidence type="ECO:0007829" key="45">
    <source>
        <dbReference type="PDB" id="2WWX"/>
    </source>
</evidence>
<evidence type="ECO:0007829" key="46">
    <source>
        <dbReference type="PDB" id="3L0I"/>
    </source>
</evidence>
<evidence type="ECO:0007829" key="47">
    <source>
        <dbReference type="PDB" id="3SFV"/>
    </source>
</evidence>
<evidence type="ECO:0007829" key="48">
    <source>
        <dbReference type="PDB" id="7EQ2"/>
    </source>
</evidence>
<protein>
    <recommendedName>
        <fullName>Ras-related protein Rab-1A</fullName>
        <ecNumber evidence="14">3.6.5.2</ecNumber>
    </recommendedName>
    <alternativeName>
        <fullName>YPT1-related protein</fullName>
    </alternativeName>
</protein>
<gene>
    <name type="primary">RAB1A</name>
    <name type="synonym">RAB1</name>
</gene>
<sequence length="205" mass="22678">MSSMNPEYDYLFKLLLIGDSGVGKSCLLLRFADDTYTESYISTIGVDFKIRTIELDGKTIKLQIWDTAGQERFRTITSSYYRGAHGIIVVYDVTDQESFNNVKQWLQEIDRYASENVNKLLVGNKCDLTTKKVVDYTTAKEFADSLGIPFLETSAKNATNVEQSFMTMAAEIKKRMGPGATAGGAEKSNVKIQSTPVKQSGGGCC</sequence>
<comment type="function">
    <text evidence="2 8 9 10 14 18">The small GTPases Rab are key regulators of intracellular membrane trafficking, from the formation of transport vesicles to their fusion with membranes (PubMed:20639577, PubMed:20861236, PubMed:21303926, PubMed:22939626). Rabs cycle between an inactive GDP-bound form and an active GTP-bound form that is able to recruit to membranes different sets of downstream effectors directly responsible for vesicle formation, movement, tethering and fusion (PubMed:20639577, PubMed:20861236, PubMed:21303926, PubMed:22939626). RAB1A regulates vesicular protein transport from the endoplasmic reticulum (ER) to the Golgi compartment and on to the cell surface, and plays a role in IL-8 and growth hormone secretion (PubMed:21303926). Required to modulate the compacted morphology of the Golgi (PubMed:26209634). Regulates the level of CASR present at the cell membrane (PubMed:20861236). Plays a role in cell adhesion and cell migration, via its role in protein trafficking (PubMed:20639577). Plays a role in autophagosome assembly and cellular defense reactions against pathogenic bacteria (PubMed:22939626). Plays a role in microtubule-dependent protein transport by early endosomes and in anterograde melanosome transport (By similarity).</text>
</comment>
<comment type="catalytic activity">
    <reaction evidence="14">
        <text>GTP + H2O = GDP + phosphate + H(+)</text>
        <dbReference type="Rhea" id="RHEA:19669"/>
        <dbReference type="ChEBI" id="CHEBI:15377"/>
        <dbReference type="ChEBI" id="CHEBI:15378"/>
        <dbReference type="ChEBI" id="CHEBI:37565"/>
        <dbReference type="ChEBI" id="CHEBI:43474"/>
        <dbReference type="ChEBI" id="CHEBI:58189"/>
        <dbReference type="EC" id="3.6.5.2"/>
    </reaction>
    <physiologicalReaction direction="left-to-right" evidence="32">
        <dbReference type="Rhea" id="RHEA:19670"/>
    </physiologicalReaction>
</comment>
<comment type="cofactor">
    <cofactor evidence="13 14 15 17 24">
        <name>Mg(2+)</name>
        <dbReference type="ChEBI" id="CHEBI:18420"/>
    </cofactor>
</comment>
<comment type="activity regulation">
    <text evidence="29">Regulated by guanine nucleotide exchange factors (GEFs) which promote the exchange of bound GDP for free GTP. Regulated by GTPase activating proteins (GAPs) which increase the GTP hydrolysis activity (Probable). Inhibited by GDP dissociation inhibitors (GDIs) (Probable).</text>
</comment>
<comment type="subunit">
    <text evidence="3 7 16 19">May interact with YIPF5 (By similarity). Interacts with C9orf72; the interaction mediates recruitment of RAB1A to the ATG1/ULK1 kinase complex (PubMed:27334615). Interacts with GDI1; this promotes dissociation from membranes (PubMed:20176951, PubMed:23815289).</text>
</comment>
<comment type="subunit">
    <text evidence="11">(Microbial infection) Interacts with L.pneumophila AnkX.</text>
</comment>
<comment type="subunit">
    <text evidence="12">(Microbial infection) Interacts with L.pneumophila Lem3.</text>
</comment>
<comment type="subunit">
    <text evidence="13">(Microbial infection) Interacts with L.pneumophila LidA.</text>
</comment>
<comment type="subunit">
    <text evidence="6 7">(Microbial infection) Interacts with L.pneumophila DrrA; this disrupts the interaction between RAB1A and GDI1 and promotes the exchange of RAB1A-bound GDP with GTP.</text>
</comment>
<comment type="subunit">
    <text evidence="14">(Microbial infection) Interacts with E.coli EspG and S.flexneri VirA; this impairs ER to Golgi trafficking and protein secretion.</text>
</comment>
<comment type="subunit">
    <text evidence="15 17">(Microbial infection) Interacts with L.pneumophila and L.drancourtii LepB; this enhances RAB1A GTPase activity.</text>
</comment>
<comment type="subunit">
    <text evidence="14">(Microbial infection) Identified in a complex composed of RAB1A, ARF6 and E.coli EspG.</text>
</comment>
<comment type="interaction">
    <interactant intactId="EBI-716845">
        <id>P62820</id>
    </interactant>
    <interactant intactId="EBI-16693635">
        <id>Q96LT7-1</id>
        <label>C9orf72</label>
    </interactant>
    <organismsDiffer>false</organismsDiffer>
    <experiments>5</experiments>
</comment>
<comment type="interaction">
    <interactant intactId="EBI-716845">
        <id>P62820</id>
    </interactant>
    <interactant intactId="EBI-16693673">
        <id>Q96LT7-2</id>
        <label>C9orf72</label>
    </interactant>
    <organismsDiffer>false</organismsDiffer>
    <experiments>4</experiments>
</comment>
<comment type="interaction">
    <interactant intactId="EBI-716845">
        <id>P62820</id>
    </interactant>
    <interactant intactId="EBI-946999">
        <id>P31150</id>
        <label>GDI1</label>
    </interactant>
    <organismsDiffer>false</organismsDiffer>
    <experiments>7</experiments>
</comment>
<comment type="interaction">
    <interactant intactId="EBI-716845">
        <id>P62820</id>
    </interactant>
    <interactant intactId="EBI-359260">
        <id>P42345</id>
        <label>MTOR</label>
    </interactant>
    <organismsDiffer>false</organismsDiffer>
    <experiments>4</experiments>
</comment>
<comment type="interaction">
    <interactant intactId="EBI-716845">
        <id>P62820</id>
    </interactant>
    <interactant intactId="EBI-6148898">
        <id>Q01968</id>
        <label>OCRL</label>
    </interactant>
    <organismsDiffer>false</organismsDiffer>
    <experiments>8</experiments>
</comment>
<comment type="interaction">
    <interactant intactId="EBI-716845">
        <id>P62820</id>
    </interactant>
    <interactant intactId="EBI-713992">
        <id>P47224</id>
        <label>RABIF</label>
    </interactant>
    <organismsDiffer>false</organismsDiffer>
    <experiments>5</experiments>
</comment>
<comment type="interaction">
    <interactant intactId="EBI-716845">
        <id>P62820</id>
    </interactant>
    <interactant intactId="EBI-1567928">
        <id>Q8N122</id>
        <label>RPTOR</label>
    </interactant>
    <organismsDiffer>false</organismsDiffer>
    <experiments>4</experiments>
</comment>
<comment type="interaction">
    <interactant intactId="EBI-716845">
        <id>P62820</id>
    </interactant>
    <interactant intactId="EBI-15838677">
        <id>Q29ST3</id>
        <label>drrA</label>
    </interactant>
    <organismsDiffer>true</organismsDiffer>
    <experiments>2</experiments>
</comment>
<comment type="interaction">
    <interactant intactId="EBI-716845">
        <id>P62820</id>
    </interactant>
    <interactant intactId="EBI-7632432">
        <id>Q5ZSQ3</id>
        <label>drrA</label>
    </interactant>
    <organismsDiffer>true</organismsDiffer>
    <experiments>7</experiments>
</comment>
<comment type="interaction">
    <interactant intactId="EBI-716845">
        <id>P62820</id>
    </interactant>
    <interactant intactId="EBI-40253342">
        <id>Q5ZU30</id>
        <label>setA</label>
    </interactant>
    <organismsDiffer>true</organismsDiffer>
    <experiments>3</experiments>
</comment>
<comment type="interaction">
    <interactant intactId="EBI-15666813">
        <id>P62820-1</id>
    </interactant>
    <interactant intactId="EBI-1049143">
        <id>P50395</id>
        <label>GDI2</label>
    </interactant>
    <organismsDiffer>false</organismsDiffer>
    <experiments>2</experiments>
</comment>
<comment type="interaction">
    <interactant intactId="EBI-15666813">
        <id>P62820-1</id>
    </interactant>
    <interactant intactId="EBI-15838677">
        <id>Q29ST3</id>
        <label>drrA</label>
    </interactant>
    <organismsDiffer>true</organismsDiffer>
    <experiments>3</experiments>
</comment>
<comment type="interaction">
    <interactant intactId="EBI-15666813">
        <id>P62820-1</id>
    </interactant>
    <interactant intactId="EBI-15666803">
        <id>Q6X1Y7</id>
        <label>lepB</label>
    </interactant>
    <organismsDiffer>true</organismsDiffer>
    <experiments>2</experiments>
</comment>
<comment type="subcellular location">
    <subcellularLocation>
        <location evidence="14">Golgi apparatus</location>
    </subcellularLocation>
    <subcellularLocation>
        <location evidence="14">Endoplasmic reticulum</location>
    </subcellularLocation>
    <subcellularLocation>
        <location evidence="10">Early endosome</location>
    </subcellularLocation>
    <subcellularLocation>
        <location evidence="31">Cytoplasm</location>
        <location evidence="31">Cytosol</location>
    </subcellularLocation>
    <subcellularLocation>
        <location evidence="6 16">Membrane</location>
    </subcellularLocation>
    <subcellularLocation>
        <location evidence="2">Melanosome</location>
    </subcellularLocation>
    <text evidence="31">Alternates between membrane-associated and cytosolic forms.</text>
</comment>
<comment type="alternative products">
    <event type="alternative splicing"/>
    <isoform>
        <id>P62820-1</id>
        <id>P11476-1</id>
        <name>1</name>
        <sequence type="displayed"/>
    </isoform>
    <isoform>
        <id>P62820-2</id>
        <id>P11476-2</id>
        <name>2</name>
        <sequence type="described" ref="VSP_005525"/>
    </isoform>
    <isoform>
        <id>P62820-3</id>
        <id>P11476-3</id>
        <name>3</name>
        <sequence type="described" ref="VSP_005526"/>
    </isoform>
</comment>
<comment type="domain">
    <text evidence="13">Switch 1, switch 2 and the interswitch regions are characteristic of Rab GTPases and mediate the interactions with Rab downstream effectors. The switch regions undergo conformational changes upon nucleotide binding which drive interaction with specific sets of effector proteins, with most effectors only binding to GTP-bound Rab.</text>
</comment>
<comment type="PTM">
    <text evidence="5 11 12">Phosphorylated by CDK1 kinase during mitosis.</text>
</comment>
<comment type="PTM">
    <text evidence="11 12">(Microbial infection) Phosphocholinated at Ser-79 by L.pneumophila AnkX, leading to displace GDP dissociation inhibitors (GDI) (PubMed:21822290). Both GDP-bound and GTP-bound forms can be phosphocholinated. Dephosphocholinated by L.pneumophila Lem3, restoring accessibility to L.pneumophila GTPase effector LepB (PubMed:22158903).</text>
</comment>
<comment type="PTM">
    <text evidence="20 21">(Microbial infection) Glycosylated by S.typhimurium protein Ssek3: arginine GlcNAcylation prevents GTPase activity, thereby disrupting vesicular protein transport from the endoplasmic reticulum (ER) to the Golgi compartment.</text>
</comment>
<comment type="PTM">
    <text evidence="1">Ubiquitinated via 'Lys-11'-linked ubiquitination on Lys-49 and Lys-61; impairing the recruitment of guanosine diphosphate (GDP) dissociation inhibitor 1/GDI1.</text>
</comment>
<comment type="similarity">
    <text evidence="29">Belongs to the small GTPase superfamily. Rab family.</text>
</comment>
<accession>P62820</accession>
<accession>P11476</accession>
<accession>Q6FIE7</accession>
<accession>Q96N61</accession>
<accession>Q9Y3T2</accession>
<dbReference type="EC" id="3.6.5.2" evidence="14"/>
<dbReference type="EMBL" id="M28209">
    <property type="protein sequence ID" value="AAA60240.1"/>
    <property type="molecule type" value="mRNA"/>
</dbReference>
<dbReference type="EMBL" id="AL050268">
    <property type="protein sequence ID" value="CAB43369.1"/>
    <property type="molecule type" value="mRNA"/>
</dbReference>
<dbReference type="EMBL" id="BX571747">
    <property type="protein sequence ID" value="CAE11872.1"/>
    <property type="molecule type" value="mRNA"/>
</dbReference>
<dbReference type="EMBL" id="AK055927">
    <property type="protein sequence ID" value="BAB71048.1"/>
    <property type="molecule type" value="mRNA"/>
</dbReference>
<dbReference type="EMBL" id="AF498929">
    <property type="protein sequence ID" value="AAM21077.1"/>
    <property type="molecule type" value="mRNA"/>
</dbReference>
<dbReference type="EMBL" id="CR533479">
    <property type="protein sequence ID" value="CAG38510.1"/>
    <property type="molecule type" value="mRNA"/>
</dbReference>
<dbReference type="EMBL" id="CH471053">
    <property type="protein sequence ID" value="EAW99921.1"/>
    <property type="molecule type" value="Genomic_DNA"/>
</dbReference>
<dbReference type="EMBL" id="BC000905">
    <property type="protein sequence ID" value="AAH00905.1"/>
    <property type="molecule type" value="mRNA"/>
</dbReference>
<dbReference type="CCDS" id="CCDS46305.1">
    <molecule id="P62820-3"/>
</dbReference>
<dbReference type="CCDS" id="CCDS46306.1"/>
<dbReference type="PIR" id="A34323">
    <property type="entry name" value="TVHUYP"/>
</dbReference>
<dbReference type="RefSeq" id="NP_004152.1">
    <molecule id="P62820-1"/>
    <property type="nucleotide sequence ID" value="NM_004161.5"/>
</dbReference>
<dbReference type="RefSeq" id="NP_056358.1">
    <molecule id="P62820-3"/>
    <property type="nucleotide sequence ID" value="NM_015543.2"/>
</dbReference>
<dbReference type="PDB" id="2FOL">
    <property type="method" value="X-ray"/>
    <property type="resolution" value="2.63 A"/>
    <property type="chains" value="A=6-177"/>
</dbReference>
<dbReference type="PDB" id="2WWX">
    <property type="method" value="X-ray"/>
    <property type="resolution" value="1.50 A"/>
    <property type="chains" value="A=4-178"/>
</dbReference>
<dbReference type="PDB" id="3L0I">
    <property type="method" value="X-ray"/>
    <property type="resolution" value="2.85 A"/>
    <property type="chains" value="B/D=1-177"/>
</dbReference>
<dbReference type="PDB" id="3SFV">
    <property type="method" value="X-ray"/>
    <property type="resolution" value="1.73 A"/>
    <property type="chains" value="A=1-176"/>
</dbReference>
<dbReference type="PDB" id="3TKL">
    <property type="method" value="X-ray"/>
    <property type="resolution" value="2.18 A"/>
    <property type="chains" value="A=1-191"/>
</dbReference>
<dbReference type="PDB" id="4FMB">
    <property type="method" value="X-ray"/>
    <property type="resolution" value="3.20 A"/>
    <property type="chains" value="B/D/F=6-176"/>
</dbReference>
<dbReference type="PDB" id="4FMC">
    <property type="method" value="X-ray"/>
    <property type="resolution" value="2.80 A"/>
    <property type="chains" value="B/D=6-176, F=14-115"/>
</dbReference>
<dbReference type="PDB" id="4FMD">
    <property type="method" value="X-ray"/>
    <property type="resolution" value="3.05 A"/>
    <property type="chains" value="B/D=6-176, F=13-176"/>
</dbReference>
<dbReference type="PDB" id="4FME">
    <property type="method" value="X-ray"/>
    <property type="resolution" value="4.10 A"/>
    <property type="chains" value="B/E=6-176"/>
</dbReference>
<dbReference type="PDB" id="4IRU">
    <property type="method" value="X-ray"/>
    <property type="resolution" value="3.20 A"/>
    <property type="chains" value="B/D/F=4-177"/>
</dbReference>
<dbReference type="PDB" id="4JVS">
    <property type="method" value="X-ray"/>
    <property type="resolution" value="2.78 A"/>
    <property type="chains" value="B=1-177"/>
</dbReference>
<dbReference type="PDB" id="7EQ2">
    <property type="method" value="X-ray"/>
    <property type="resolution" value="1.55 A"/>
    <property type="chains" value="A/B=1-176"/>
</dbReference>
<dbReference type="PDB" id="9MHF">
    <property type="method" value="EM"/>
    <property type="resolution" value="2.73 A"/>
    <property type="chains" value="E=1-205"/>
</dbReference>
<dbReference type="PDB" id="9MHG">
    <property type="method" value="EM"/>
    <property type="resolution" value="3.20 A"/>
    <property type="chains" value="E=1-205"/>
</dbReference>
<dbReference type="PDB" id="9MHH">
    <property type="method" value="EM"/>
    <property type="resolution" value="4.50 A"/>
    <property type="chains" value="E=1-205"/>
</dbReference>
<dbReference type="PDBsum" id="2FOL"/>
<dbReference type="PDBsum" id="2WWX"/>
<dbReference type="PDBsum" id="3L0I"/>
<dbReference type="PDBsum" id="3SFV"/>
<dbReference type="PDBsum" id="3TKL"/>
<dbReference type="PDBsum" id="4FMB"/>
<dbReference type="PDBsum" id="4FMC"/>
<dbReference type="PDBsum" id="4FMD"/>
<dbReference type="PDBsum" id="4FME"/>
<dbReference type="PDBsum" id="4IRU"/>
<dbReference type="PDBsum" id="4JVS"/>
<dbReference type="PDBsum" id="7EQ2"/>
<dbReference type="PDBsum" id="9MHF"/>
<dbReference type="PDBsum" id="9MHG"/>
<dbReference type="PDBsum" id="9MHH"/>
<dbReference type="EMDB" id="EMD-48276"/>
<dbReference type="EMDB" id="EMD-48277"/>
<dbReference type="EMDB" id="EMD-48278"/>
<dbReference type="SASBDB" id="P62820"/>
<dbReference type="SMR" id="P62820"/>
<dbReference type="BioGRID" id="111799">
    <property type="interactions" value="467"/>
</dbReference>
<dbReference type="DIP" id="DIP-1063N"/>
<dbReference type="FunCoup" id="P62820">
    <property type="interactions" value="3469"/>
</dbReference>
<dbReference type="IntAct" id="P62820">
    <property type="interactions" value="145"/>
</dbReference>
<dbReference type="MINT" id="P62820"/>
<dbReference type="STRING" id="9606.ENSP00000387286"/>
<dbReference type="ChEMBL" id="CHEMBL3879826"/>
<dbReference type="GlyCosmos" id="P62820">
    <property type="glycosylation" value="4 sites, No reported glycans"/>
</dbReference>
<dbReference type="GlyGen" id="P62820">
    <property type="glycosylation" value="1 site, 1 O-linked glycan (1 site)"/>
</dbReference>
<dbReference type="iPTMnet" id="P62820"/>
<dbReference type="MetOSite" id="P62820"/>
<dbReference type="PhosphoSitePlus" id="P62820"/>
<dbReference type="SwissPalm" id="P62820"/>
<dbReference type="BioMuta" id="RAB1A"/>
<dbReference type="DMDM" id="51338603"/>
<dbReference type="jPOST" id="P62820"/>
<dbReference type="MassIVE" id="P62820"/>
<dbReference type="PaxDb" id="9606-ENSP00000387286"/>
<dbReference type="PeptideAtlas" id="P62820"/>
<dbReference type="PRIDE" id="P62820"/>
<dbReference type="ProteomicsDB" id="57426"/>
<dbReference type="ProteomicsDB" id="57427">
    <molecule id="P62820-2"/>
</dbReference>
<dbReference type="ProteomicsDB" id="57428">
    <molecule id="P62820-3"/>
</dbReference>
<dbReference type="Pumba" id="P62820"/>
<dbReference type="Antibodypedia" id="3942">
    <property type="antibodies" value="198 antibodies from 31 providers"/>
</dbReference>
<dbReference type="DNASU" id="5861"/>
<dbReference type="YCharOS" id="P62820">
    <property type="antibodies" value="Tested 7 antibodies from 5 manufacturers"/>
</dbReference>
<dbReference type="Ensembl" id="ENST00000398529.7">
    <molecule id="P62820-3"/>
    <property type="protein sequence ID" value="ENSP00000381540.3"/>
    <property type="gene ID" value="ENSG00000138069.18"/>
</dbReference>
<dbReference type="Ensembl" id="ENST00000409784.8">
    <molecule id="P62820-1"/>
    <property type="protein sequence ID" value="ENSP00000387286.3"/>
    <property type="gene ID" value="ENSG00000138069.18"/>
</dbReference>
<dbReference type="Ensembl" id="ENST00000409892.5">
    <molecule id="P62820-2"/>
    <property type="protein sequence ID" value="ENSP00000386451.1"/>
    <property type="gene ID" value="ENSG00000138069.18"/>
</dbReference>
<dbReference type="Ensembl" id="ENST00000649427.1">
    <molecule id="P62820-1"/>
    <property type="protein sequence ID" value="ENSP00000497078.1"/>
    <property type="gene ID" value="ENSG00000138069.18"/>
</dbReference>
<dbReference type="GeneID" id="5861"/>
<dbReference type="KEGG" id="hsa:5861"/>
<dbReference type="MANE-Select" id="ENST00000409784.8">
    <property type="protein sequence ID" value="ENSP00000387286.3"/>
    <property type="RefSeq nucleotide sequence ID" value="NM_004161.5"/>
    <property type="RefSeq protein sequence ID" value="NP_004152.1"/>
</dbReference>
<dbReference type="UCSC" id="uc002sdn.4">
    <property type="organism name" value="human"/>
</dbReference>
<dbReference type="AGR" id="HGNC:9758"/>
<dbReference type="CTD" id="5861"/>
<dbReference type="DisGeNET" id="5861"/>
<dbReference type="GeneCards" id="RAB1A"/>
<dbReference type="HGNC" id="HGNC:9758">
    <property type="gene designation" value="RAB1A"/>
</dbReference>
<dbReference type="HPA" id="ENSG00000138069">
    <property type="expression patterns" value="Low tissue specificity"/>
</dbReference>
<dbReference type="MIM" id="179508">
    <property type="type" value="gene"/>
</dbReference>
<dbReference type="neXtProt" id="NX_P62820"/>
<dbReference type="OpenTargets" id="ENSG00000138069"/>
<dbReference type="PharmGKB" id="PA34107"/>
<dbReference type="VEuPathDB" id="HostDB:ENSG00000138069"/>
<dbReference type="eggNOG" id="KOG0084">
    <property type="taxonomic scope" value="Eukaryota"/>
</dbReference>
<dbReference type="GeneTree" id="ENSGT00940000154958"/>
<dbReference type="HOGENOM" id="CLU_041217_10_7_1"/>
<dbReference type="InParanoid" id="P62820"/>
<dbReference type="OMA" id="IPHVEIS"/>
<dbReference type="OrthoDB" id="9989112at2759"/>
<dbReference type="PAN-GO" id="P62820">
    <property type="GO annotations" value="4 GO annotations based on evolutionary models"/>
</dbReference>
<dbReference type="PhylomeDB" id="P62820"/>
<dbReference type="TreeFam" id="TF300097"/>
<dbReference type="BRENDA" id="3.6.5.2">
    <property type="organism ID" value="2681"/>
</dbReference>
<dbReference type="PathwayCommons" id="P62820"/>
<dbReference type="Reactome" id="R-HSA-162658">
    <property type="pathway name" value="Golgi Cisternae Pericentriolar Stack Reorganization"/>
</dbReference>
<dbReference type="Reactome" id="R-HSA-204005">
    <property type="pathway name" value="COPII-mediated vesicle transport"/>
</dbReference>
<dbReference type="Reactome" id="R-HSA-6807878">
    <property type="pathway name" value="COPI-mediated anterograde transport"/>
</dbReference>
<dbReference type="Reactome" id="R-HSA-6811434">
    <property type="pathway name" value="COPI-dependent Golgi-to-ER retrograde traffic"/>
</dbReference>
<dbReference type="Reactome" id="R-HSA-8873719">
    <property type="pathway name" value="RAB geranylgeranylation"/>
</dbReference>
<dbReference type="Reactome" id="R-HSA-8876198">
    <property type="pathway name" value="RAB GEFs exchange GTP for GDP on RABs"/>
</dbReference>
<dbReference type="SignaLink" id="P62820"/>
<dbReference type="SIGNOR" id="P62820"/>
<dbReference type="BioGRID-ORCS" id="5861">
    <property type="hits" value="148 hits in 1187 CRISPR screens"/>
</dbReference>
<dbReference type="CD-CODE" id="91857CE7">
    <property type="entry name" value="Nucleolus"/>
</dbReference>
<dbReference type="CD-CODE" id="DEE660B4">
    <property type="entry name" value="Stress granule"/>
</dbReference>
<dbReference type="CD-CODE" id="FB4E32DD">
    <property type="entry name" value="Presynaptic clusters and postsynaptic densities"/>
</dbReference>
<dbReference type="ChiTaRS" id="RAB1A">
    <property type="organism name" value="human"/>
</dbReference>
<dbReference type="EvolutionaryTrace" id="P62820"/>
<dbReference type="GeneWiki" id="RAB1A"/>
<dbReference type="GenomeRNAi" id="5861"/>
<dbReference type="Pharos" id="P62820">
    <property type="development level" value="Tbio"/>
</dbReference>
<dbReference type="PRO" id="PR:P62820"/>
<dbReference type="Proteomes" id="UP000005640">
    <property type="component" value="Chromosome 2"/>
</dbReference>
<dbReference type="RNAct" id="P62820">
    <property type="molecule type" value="protein"/>
</dbReference>
<dbReference type="Bgee" id="ENSG00000138069">
    <property type="expression patterns" value="Expressed in sperm and 211 other cell types or tissues"/>
</dbReference>
<dbReference type="ExpressionAtlas" id="P62820">
    <property type="expression patterns" value="baseline and differential"/>
</dbReference>
<dbReference type="GO" id="GO:0005829">
    <property type="term" value="C:cytosol"/>
    <property type="evidence" value="ECO:0000304"/>
    <property type="project" value="Reactome"/>
</dbReference>
<dbReference type="GO" id="GO:0005769">
    <property type="term" value="C:early endosome"/>
    <property type="evidence" value="ECO:0007669"/>
    <property type="project" value="UniProtKB-SubCell"/>
</dbReference>
<dbReference type="GO" id="GO:0012505">
    <property type="term" value="C:endomembrane system"/>
    <property type="evidence" value="ECO:0000318"/>
    <property type="project" value="GO_Central"/>
</dbReference>
<dbReference type="GO" id="GO:0005783">
    <property type="term" value="C:endoplasmic reticulum"/>
    <property type="evidence" value="ECO:0000314"/>
    <property type="project" value="UniProt"/>
</dbReference>
<dbReference type="GO" id="GO:0070062">
    <property type="term" value="C:extracellular exosome"/>
    <property type="evidence" value="ECO:0007005"/>
    <property type="project" value="UniProtKB"/>
</dbReference>
<dbReference type="GO" id="GO:0005794">
    <property type="term" value="C:Golgi apparatus"/>
    <property type="evidence" value="ECO:0007005"/>
    <property type="project" value="UniProtKB"/>
</dbReference>
<dbReference type="GO" id="GO:0000139">
    <property type="term" value="C:Golgi membrane"/>
    <property type="evidence" value="ECO:0000304"/>
    <property type="project" value="Reactome"/>
</dbReference>
<dbReference type="GO" id="GO:0042470">
    <property type="term" value="C:melanosome"/>
    <property type="evidence" value="ECO:0007669"/>
    <property type="project" value="UniProtKB-SubCell"/>
</dbReference>
<dbReference type="GO" id="GO:0030658">
    <property type="term" value="C:transport vesicle membrane"/>
    <property type="evidence" value="ECO:0000304"/>
    <property type="project" value="Reactome"/>
</dbReference>
<dbReference type="GO" id="GO:0045296">
    <property type="term" value="F:cadherin binding"/>
    <property type="evidence" value="ECO:0007005"/>
    <property type="project" value="BHF-UCL"/>
</dbReference>
<dbReference type="GO" id="GO:0003925">
    <property type="term" value="F:G protein activity"/>
    <property type="evidence" value="ECO:0007669"/>
    <property type="project" value="UniProtKB-EC"/>
</dbReference>
<dbReference type="GO" id="GO:0005525">
    <property type="term" value="F:GTP binding"/>
    <property type="evidence" value="ECO:0007669"/>
    <property type="project" value="UniProtKB-KW"/>
</dbReference>
<dbReference type="GO" id="GO:0003924">
    <property type="term" value="F:GTPase activity"/>
    <property type="evidence" value="ECO:0000314"/>
    <property type="project" value="UniProtKB"/>
</dbReference>
<dbReference type="GO" id="GO:0000045">
    <property type="term" value="P:autophagosome assembly"/>
    <property type="evidence" value="ECO:0000315"/>
    <property type="project" value="UniProtKB"/>
</dbReference>
<dbReference type="GO" id="GO:0006914">
    <property type="term" value="P:autophagy"/>
    <property type="evidence" value="ECO:0000315"/>
    <property type="project" value="UniProtKB"/>
</dbReference>
<dbReference type="GO" id="GO:0016477">
    <property type="term" value="P:cell migration"/>
    <property type="evidence" value="ECO:0000315"/>
    <property type="project" value="UniProtKB"/>
</dbReference>
<dbReference type="GO" id="GO:0090110">
    <property type="term" value="P:COPII-coated vesicle cargo loading"/>
    <property type="evidence" value="ECO:0000315"/>
    <property type="project" value="UniProtKB"/>
</dbReference>
<dbReference type="GO" id="GO:0042742">
    <property type="term" value="P:defense response to bacterium"/>
    <property type="evidence" value="ECO:0000315"/>
    <property type="project" value="UniProtKB"/>
</dbReference>
<dbReference type="GO" id="GO:0006897">
    <property type="term" value="P:endocytosis"/>
    <property type="evidence" value="ECO:0000315"/>
    <property type="project" value="UniProtKB"/>
</dbReference>
<dbReference type="GO" id="GO:0006888">
    <property type="term" value="P:endoplasmic reticulum to Golgi vesicle-mediated transport"/>
    <property type="evidence" value="ECO:0000315"/>
    <property type="project" value="UniProtKB"/>
</dbReference>
<dbReference type="GO" id="GO:0007030">
    <property type="term" value="P:Golgi organization"/>
    <property type="evidence" value="ECO:0000315"/>
    <property type="project" value="UniProtKB"/>
</dbReference>
<dbReference type="GO" id="GO:0030252">
    <property type="term" value="P:growth hormone secretion"/>
    <property type="evidence" value="ECO:0000315"/>
    <property type="project" value="UniProtKB"/>
</dbReference>
<dbReference type="GO" id="GO:0006886">
    <property type="term" value="P:intracellular protein transport"/>
    <property type="evidence" value="ECO:0000318"/>
    <property type="project" value="GO_Central"/>
</dbReference>
<dbReference type="GO" id="GO:0032402">
    <property type="term" value="P:melanosome transport"/>
    <property type="evidence" value="ECO:0007669"/>
    <property type="project" value="Ensembl"/>
</dbReference>
<dbReference type="GO" id="GO:1903020">
    <property type="term" value="P:positive regulation of glycoprotein metabolic process"/>
    <property type="evidence" value="ECO:0000316"/>
    <property type="project" value="UniProtKB"/>
</dbReference>
<dbReference type="GO" id="GO:0032757">
    <property type="term" value="P:positive regulation of interleukin-8 production"/>
    <property type="evidence" value="ECO:0000315"/>
    <property type="project" value="UniProtKB"/>
</dbReference>
<dbReference type="GO" id="GO:0034446">
    <property type="term" value="P:substrate adhesion-dependent cell spreading"/>
    <property type="evidence" value="ECO:0007669"/>
    <property type="project" value="Ensembl"/>
</dbReference>
<dbReference type="GO" id="GO:0047496">
    <property type="term" value="P:vesicle transport along microtubule"/>
    <property type="evidence" value="ECO:0000315"/>
    <property type="project" value="UniProtKB"/>
</dbReference>
<dbReference type="GO" id="GO:0016192">
    <property type="term" value="P:vesicle-mediated transport"/>
    <property type="evidence" value="ECO:0000304"/>
    <property type="project" value="ProtInc"/>
</dbReference>
<dbReference type="GO" id="GO:0019068">
    <property type="term" value="P:virion assembly"/>
    <property type="evidence" value="ECO:0000315"/>
    <property type="project" value="UniProtKB"/>
</dbReference>
<dbReference type="CDD" id="cd01869">
    <property type="entry name" value="Rab1_Ypt1"/>
    <property type="match status" value="1"/>
</dbReference>
<dbReference type="FunFam" id="3.40.50.300:FF:000069">
    <property type="entry name" value="Ras GTP-binding protein YPT1"/>
    <property type="match status" value="1"/>
</dbReference>
<dbReference type="Gene3D" id="3.40.50.300">
    <property type="entry name" value="P-loop containing nucleotide triphosphate hydrolases"/>
    <property type="match status" value="1"/>
</dbReference>
<dbReference type="InterPro" id="IPR027417">
    <property type="entry name" value="P-loop_NTPase"/>
</dbReference>
<dbReference type="InterPro" id="IPR050227">
    <property type="entry name" value="Rab"/>
</dbReference>
<dbReference type="InterPro" id="IPR005225">
    <property type="entry name" value="Small_GTP-bd"/>
</dbReference>
<dbReference type="InterPro" id="IPR001806">
    <property type="entry name" value="Small_GTPase"/>
</dbReference>
<dbReference type="NCBIfam" id="TIGR00231">
    <property type="entry name" value="small_GTP"/>
    <property type="match status" value="1"/>
</dbReference>
<dbReference type="PANTHER" id="PTHR47977">
    <property type="entry name" value="RAS-RELATED PROTEIN RAB"/>
    <property type="match status" value="1"/>
</dbReference>
<dbReference type="Pfam" id="PF00071">
    <property type="entry name" value="Ras"/>
    <property type="match status" value="1"/>
</dbReference>
<dbReference type="PRINTS" id="PR00449">
    <property type="entry name" value="RASTRNSFRMNG"/>
</dbReference>
<dbReference type="SMART" id="SM00177">
    <property type="entry name" value="ARF"/>
    <property type="match status" value="1"/>
</dbReference>
<dbReference type="SMART" id="SM00175">
    <property type="entry name" value="RAB"/>
    <property type="match status" value="1"/>
</dbReference>
<dbReference type="SMART" id="SM00176">
    <property type="entry name" value="RAN"/>
    <property type="match status" value="1"/>
</dbReference>
<dbReference type="SMART" id="SM00173">
    <property type="entry name" value="RAS"/>
    <property type="match status" value="1"/>
</dbReference>
<dbReference type="SMART" id="SM00174">
    <property type="entry name" value="RHO"/>
    <property type="match status" value="1"/>
</dbReference>
<dbReference type="SUPFAM" id="SSF52540">
    <property type="entry name" value="P-loop containing nucleoside triphosphate hydrolases"/>
    <property type="match status" value="1"/>
</dbReference>
<dbReference type="PROSITE" id="PS51419">
    <property type="entry name" value="RAB"/>
    <property type="match status" value="1"/>
</dbReference>
<organism>
    <name type="scientific">Homo sapiens</name>
    <name type="common">Human</name>
    <dbReference type="NCBI Taxonomy" id="9606"/>
    <lineage>
        <taxon>Eukaryota</taxon>
        <taxon>Metazoa</taxon>
        <taxon>Chordata</taxon>
        <taxon>Craniata</taxon>
        <taxon>Vertebrata</taxon>
        <taxon>Euteleostomi</taxon>
        <taxon>Mammalia</taxon>
        <taxon>Eutheria</taxon>
        <taxon>Euarchontoglires</taxon>
        <taxon>Primates</taxon>
        <taxon>Haplorrhini</taxon>
        <taxon>Catarrhini</taxon>
        <taxon>Hominidae</taxon>
        <taxon>Homo</taxon>
    </lineage>
</organism>
<reference key="1">
    <citation type="journal article" date="1989" name="J. Biol. Chem.">
        <title>The human Rab genes encode a family of GTP-binding proteins related to yeast YPT1 and SEC4 products involved in secretion.</title>
        <authorList>
            <person name="Zahraoui A."/>
            <person name="Touchot N."/>
            <person name="Chardin P."/>
            <person name="Tavitian A."/>
        </authorList>
    </citation>
    <scope>NUCLEOTIDE SEQUENCE [MRNA] (ISOFORM 1)</scope>
</reference>
<reference key="2">
    <citation type="journal article" date="2001" name="Genome Res.">
        <title>Towards a catalog of human genes and proteins: sequencing and analysis of 500 novel complete protein coding human cDNAs.</title>
        <authorList>
            <person name="Wiemann S."/>
            <person name="Weil B."/>
            <person name="Wellenreuther R."/>
            <person name="Gassenhuber J."/>
            <person name="Glassl S."/>
            <person name="Ansorge W."/>
            <person name="Boecher M."/>
            <person name="Bloecker H."/>
            <person name="Bauersachs S."/>
            <person name="Blum H."/>
            <person name="Lauber J."/>
            <person name="Duesterhoeft A."/>
            <person name="Beyer A."/>
            <person name="Koehrer K."/>
            <person name="Strack N."/>
            <person name="Mewes H.-W."/>
            <person name="Ottenwaelder B."/>
            <person name="Obermaier B."/>
            <person name="Tampe J."/>
            <person name="Heubner D."/>
            <person name="Wambutt R."/>
            <person name="Korn B."/>
            <person name="Klein M."/>
            <person name="Poustka A."/>
        </authorList>
    </citation>
    <scope>NUCLEOTIDE SEQUENCE [LARGE SCALE MRNA] (ISOFORM 3)</scope>
    <source>
        <tissue>Brain</tissue>
    </source>
</reference>
<reference key="3">
    <citation type="journal article" date="2007" name="BMC Genomics">
        <title>The full-ORF clone resource of the German cDNA consortium.</title>
        <authorList>
            <person name="Bechtel S."/>
            <person name="Rosenfelder H."/>
            <person name="Duda A."/>
            <person name="Schmidt C.P."/>
            <person name="Ernst U."/>
            <person name="Wellenreuther R."/>
            <person name="Mehrle A."/>
            <person name="Schuster C."/>
            <person name="Bahr A."/>
            <person name="Bloecker H."/>
            <person name="Heubner D."/>
            <person name="Hoerlein A."/>
            <person name="Michel G."/>
            <person name="Wedler H."/>
            <person name="Koehrer K."/>
            <person name="Ottenwaelder B."/>
            <person name="Poustka A."/>
            <person name="Wiemann S."/>
            <person name="Schupp I."/>
        </authorList>
    </citation>
    <scope>NUCLEOTIDE SEQUENCE [LARGE SCALE MRNA] (ISOFORM 1)</scope>
    <source>
        <tissue>Colon</tissue>
    </source>
</reference>
<reference key="4">
    <citation type="journal article" date="2004" name="Nat. Genet.">
        <title>Complete sequencing and characterization of 21,243 full-length human cDNAs.</title>
        <authorList>
            <person name="Ota T."/>
            <person name="Suzuki Y."/>
            <person name="Nishikawa T."/>
            <person name="Otsuki T."/>
            <person name="Sugiyama T."/>
            <person name="Irie R."/>
            <person name="Wakamatsu A."/>
            <person name="Hayashi K."/>
            <person name="Sato H."/>
            <person name="Nagai K."/>
            <person name="Kimura K."/>
            <person name="Makita H."/>
            <person name="Sekine M."/>
            <person name="Obayashi M."/>
            <person name="Nishi T."/>
            <person name="Shibahara T."/>
            <person name="Tanaka T."/>
            <person name="Ishii S."/>
            <person name="Yamamoto J."/>
            <person name="Saito K."/>
            <person name="Kawai Y."/>
            <person name="Isono Y."/>
            <person name="Nakamura Y."/>
            <person name="Nagahari K."/>
            <person name="Murakami K."/>
            <person name="Yasuda T."/>
            <person name="Iwayanagi T."/>
            <person name="Wagatsuma M."/>
            <person name="Shiratori A."/>
            <person name="Sudo H."/>
            <person name="Hosoiri T."/>
            <person name="Kaku Y."/>
            <person name="Kodaira H."/>
            <person name="Kondo H."/>
            <person name="Sugawara M."/>
            <person name="Takahashi M."/>
            <person name="Kanda K."/>
            <person name="Yokoi T."/>
            <person name="Furuya T."/>
            <person name="Kikkawa E."/>
            <person name="Omura Y."/>
            <person name="Abe K."/>
            <person name="Kamihara K."/>
            <person name="Katsuta N."/>
            <person name="Sato K."/>
            <person name="Tanikawa M."/>
            <person name="Yamazaki M."/>
            <person name="Ninomiya K."/>
            <person name="Ishibashi T."/>
            <person name="Yamashita H."/>
            <person name="Murakawa K."/>
            <person name="Fujimori K."/>
            <person name="Tanai H."/>
            <person name="Kimata M."/>
            <person name="Watanabe M."/>
            <person name="Hiraoka S."/>
            <person name="Chiba Y."/>
            <person name="Ishida S."/>
            <person name="Ono Y."/>
            <person name="Takiguchi S."/>
            <person name="Watanabe S."/>
            <person name="Yosida M."/>
            <person name="Hotuta T."/>
            <person name="Kusano J."/>
            <person name="Kanehori K."/>
            <person name="Takahashi-Fujii A."/>
            <person name="Hara H."/>
            <person name="Tanase T.-O."/>
            <person name="Nomura Y."/>
            <person name="Togiya S."/>
            <person name="Komai F."/>
            <person name="Hara R."/>
            <person name="Takeuchi K."/>
            <person name="Arita M."/>
            <person name="Imose N."/>
            <person name="Musashino K."/>
            <person name="Yuuki H."/>
            <person name="Oshima A."/>
            <person name="Sasaki N."/>
            <person name="Aotsuka S."/>
            <person name="Yoshikawa Y."/>
            <person name="Matsunawa H."/>
            <person name="Ichihara T."/>
            <person name="Shiohata N."/>
            <person name="Sano S."/>
            <person name="Moriya S."/>
            <person name="Momiyama H."/>
            <person name="Satoh N."/>
            <person name="Takami S."/>
            <person name="Terashima Y."/>
            <person name="Suzuki O."/>
            <person name="Nakagawa S."/>
            <person name="Senoh A."/>
            <person name="Mizoguchi H."/>
            <person name="Goto Y."/>
            <person name="Shimizu F."/>
            <person name="Wakebe H."/>
            <person name="Hishigaki H."/>
            <person name="Watanabe T."/>
            <person name="Sugiyama A."/>
            <person name="Takemoto M."/>
            <person name="Kawakami B."/>
            <person name="Yamazaki M."/>
            <person name="Watanabe K."/>
            <person name="Kumagai A."/>
            <person name="Itakura S."/>
            <person name="Fukuzumi Y."/>
            <person name="Fujimori Y."/>
            <person name="Komiyama M."/>
            <person name="Tashiro H."/>
            <person name="Tanigami A."/>
            <person name="Fujiwara T."/>
            <person name="Ono T."/>
            <person name="Yamada K."/>
            <person name="Fujii Y."/>
            <person name="Ozaki K."/>
            <person name="Hirao M."/>
            <person name="Ohmori Y."/>
            <person name="Kawabata A."/>
            <person name="Hikiji T."/>
            <person name="Kobatake N."/>
            <person name="Inagaki H."/>
            <person name="Ikema Y."/>
            <person name="Okamoto S."/>
            <person name="Okitani R."/>
            <person name="Kawakami T."/>
            <person name="Noguchi S."/>
            <person name="Itoh T."/>
            <person name="Shigeta K."/>
            <person name="Senba T."/>
            <person name="Matsumura K."/>
            <person name="Nakajima Y."/>
            <person name="Mizuno T."/>
            <person name="Morinaga M."/>
            <person name="Sasaki M."/>
            <person name="Togashi T."/>
            <person name="Oyama M."/>
            <person name="Hata H."/>
            <person name="Watanabe M."/>
            <person name="Komatsu T."/>
            <person name="Mizushima-Sugano J."/>
            <person name="Satoh T."/>
            <person name="Shirai Y."/>
            <person name="Takahashi Y."/>
            <person name="Nakagawa K."/>
            <person name="Okumura K."/>
            <person name="Nagase T."/>
            <person name="Nomura N."/>
            <person name="Kikuchi H."/>
            <person name="Masuho Y."/>
            <person name="Yamashita R."/>
            <person name="Nakai K."/>
            <person name="Yada T."/>
            <person name="Nakamura Y."/>
            <person name="Ohara O."/>
            <person name="Isogai T."/>
            <person name="Sugano S."/>
        </authorList>
    </citation>
    <scope>NUCLEOTIDE SEQUENCE [LARGE SCALE MRNA] (ISOFORM 2)</scope>
</reference>
<reference key="5">
    <citation type="submission" date="2002-04" db="EMBL/GenBank/DDBJ databases">
        <title>cDNA clones of human proteins involved in signal transduction sequenced by the Guthrie cDNA resource center (www.cdna.org).</title>
        <authorList>
            <person name="Puhl H.L. III"/>
            <person name="Ikeda S.R."/>
            <person name="Aronstam R.S."/>
        </authorList>
    </citation>
    <scope>NUCLEOTIDE SEQUENCE [LARGE SCALE MRNA] (ISOFORM 1)</scope>
    <source>
        <tissue>Brain</tissue>
    </source>
</reference>
<reference key="6">
    <citation type="submission" date="2004-06" db="EMBL/GenBank/DDBJ databases">
        <title>Cloning of human full open reading frames in Gateway(TM) system entry vector (pDONR201).</title>
        <authorList>
            <person name="Ebert L."/>
            <person name="Schick M."/>
            <person name="Neubert P."/>
            <person name="Schatten R."/>
            <person name="Henze S."/>
            <person name="Korn B."/>
        </authorList>
    </citation>
    <scope>NUCLEOTIDE SEQUENCE [LARGE SCALE MRNA] (ISOFORM 3)</scope>
</reference>
<reference key="7">
    <citation type="submission" date="2005-09" db="EMBL/GenBank/DDBJ databases">
        <authorList>
            <person name="Mural R.J."/>
            <person name="Istrail S."/>
            <person name="Sutton G.G."/>
            <person name="Florea L."/>
            <person name="Halpern A.L."/>
            <person name="Mobarry C.M."/>
            <person name="Lippert R."/>
            <person name="Walenz B."/>
            <person name="Shatkay H."/>
            <person name="Dew I."/>
            <person name="Miller J.R."/>
            <person name="Flanigan M.J."/>
            <person name="Edwards N.J."/>
            <person name="Bolanos R."/>
            <person name="Fasulo D."/>
            <person name="Halldorsson B.V."/>
            <person name="Hannenhalli S."/>
            <person name="Turner R."/>
            <person name="Yooseph S."/>
            <person name="Lu F."/>
            <person name="Nusskern D.R."/>
            <person name="Shue B.C."/>
            <person name="Zheng X.H."/>
            <person name="Zhong F."/>
            <person name="Delcher A.L."/>
            <person name="Huson D.H."/>
            <person name="Kravitz S.A."/>
            <person name="Mouchard L."/>
            <person name="Reinert K."/>
            <person name="Remington K.A."/>
            <person name="Clark A.G."/>
            <person name="Waterman M.S."/>
            <person name="Eichler E.E."/>
            <person name="Adams M.D."/>
            <person name="Hunkapiller M.W."/>
            <person name="Myers E.W."/>
            <person name="Venter J.C."/>
        </authorList>
    </citation>
    <scope>NUCLEOTIDE SEQUENCE [LARGE SCALE GENOMIC DNA]</scope>
</reference>
<reference key="8">
    <citation type="journal article" date="2004" name="Genome Res.">
        <title>The status, quality, and expansion of the NIH full-length cDNA project: the Mammalian Gene Collection (MGC).</title>
        <authorList>
            <consortium name="The MGC Project Team"/>
        </authorList>
    </citation>
    <scope>NUCLEOTIDE SEQUENCE [LARGE SCALE MRNA] (ISOFORM 1)</scope>
    <source>
        <tissue>Placenta</tissue>
    </source>
</reference>
<reference key="9">
    <citation type="submission" date="2005-11" db="UniProtKB">
        <authorList>
            <person name="Bienvenut W.V."/>
            <person name="Claeys D."/>
        </authorList>
    </citation>
    <scope>PROTEIN SEQUENCE OF 2-30; 52-58; 62-72; 75-111; 176-187 AND 192-198</scope>
    <scope>CLEAVAGE OF INITIATOR METHIONINE</scope>
    <scope>ACETYLATION AT SER-2</scope>
    <scope>IDENTIFICATION BY MASS SPECTROMETRY</scope>
    <source>
        <tissue>Platelet</tissue>
    </source>
</reference>
<reference key="10">
    <citation type="journal article" date="1991" name="Nature">
        <title>Phosphorylation of two small GTP-binding proteins of the Rab family by p34cdc2.</title>
        <authorList>
            <person name="Bailly E."/>
            <person name="McCaffrey M."/>
            <person name="Touchot N."/>
            <person name="Zahraoui A."/>
            <person name="Goud B."/>
            <person name="Bornens M."/>
        </authorList>
    </citation>
    <scope>PHOSPHORYLATION AT SER-194 BY CDK1</scope>
</reference>
<reference key="11">
    <citation type="journal article" date="1994" name="Proc. Natl. Acad. Sci. U.S.A.">
        <title>Rab geranylgeranyl transferase catalyzes the geranylgeranylation of adjacent cysteines in the small GTPases Rab1A, Rab3A, and Rab5A.</title>
        <authorList>
            <person name="Farnsworth C.C."/>
            <person name="Seabra M.C."/>
            <person name="Ericsson L.H."/>
            <person name="Gelb M.H."/>
            <person name="Glomset J.A."/>
        </authorList>
    </citation>
    <scope>ISOPRENYLATION AT CYS-204 AND CYS-205</scope>
    <scope>IDENTIFICATION BY MASS SPECTROMETRY</scope>
</reference>
<reference key="12">
    <citation type="journal article" date="2009" name="Nat. Rev. Mol. Cell Biol.">
        <title>Rab GTPases as coordinators of vesicle traffic.</title>
        <authorList>
            <person name="Stenmark H."/>
        </authorList>
    </citation>
    <scope>REVIEW</scope>
</reference>
<reference key="13">
    <citation type="journal article" date="2009" name="Sci. Signal.">
        <title>Quantitative phosphoproteomic analysis of T cell receptor signaling reveals system-wide modulation of protein-protein interactions.</title>
        <authorList>
            <person name="Mayya V."/>
            <person name="Lundgren D.H."/>
            <person name="Hwang S.-I."/>
            <person name="Rezaul K."/>
            <person name="Wu L."/>
            <person name="Eng J.K."/>
            <person name="Rodionov V."/>
            <person name="Han D.K."/>
        </authorList>
    </citation>
    <scope>IDENTIFICATION BY MASS SPECTROMETRY [LARGE SCALE ANALYSIS]</scope>
    <source>
        <tissue>Leukemic T-cell</tissue>
    </source>
</reference>
<reference key="14">
    <citation type="journal article" date="2010" name="Endocrinology">
        <title>Rab1 small GTP-binding protein regulates cell surface trafficking of the human calcium-sensing receptor.</title>
        <authorList>
            <person name="Zhuang X."/>
            <person name="Adipietro K.A."/>
            <person name="Datta S."/>
            <person name="Northup J.K."/>
            <person name="Ray K."/>
        </authorList>
    </citation>
    <scope>FUNCTION</scope>
    <scope>MUTAGENESIS OF ASN-124</scope>
</reference>
<reference key="15">
    <citation type="journal article" date="2010" name="J. Biol. Chem.">
        <title>Regulation of integrin beta 1 recycling to lipid rafts by Rab1a to promote cell migration.</title>
        <authorList>
            <person name="Wang C."/>
            <person name="Yoo Y."/>
            <person name="Fan H."/>
            <person name="Kim E."/>
            <person name="Guan K.L."/>
            <person name="Guan J.L."/>
        </authorList>
    </citation>
    <scope>FUNCTION</scope>
</reference>
<reference key="16">
    <citation type="journal article" date="2011" name="BMC Syst. Biol.">
        <title>Initial characterization of the human central proteome.</title>
        <authorList>
            <person name="Burkard T.R."/>
            <person name="Planyavsky M."/>
            <person name="Kaupe I."/>
            <person name="Breitwieser F.P."/>
            <person name="Buerckstuemmer T."/>
            <person name="Bennett K.L."/>
            <person name="Superti-Furga G."/>
            <person name="Colinge J."/>
        </authorList>
    </citation>
    <scope>IDENTIFICATION BY MASS SPECTROMETRY [LARGE SCALE ANALYSIS]</scope>
</reference>
<reference key="17">
    <citation type="journal article" date="2011" name="J. Cell Sci.">
        <title>Proteomic analysis of endocytic vesicles: Rab1a regulates motility of early endocytic vesicles.</title>
        <authorList>
            <person name="Mukhopadhyay A."/>
            <person name="Nieves E."/>
            <person name="Che F.Y."/>
            <person name="Wang J."/>
            <person name="Jin L."/>
            <person name="Murray J.W."/>
            <person name="Gordon K."/>
            <person name="Angeletti R.H."/>
            <person name="Wolkoff A.W."/>
        </authorList>
    </citation>
    <scope>FUNCTION</scope>
    <scope>SUBCELLULAR LOCATION</scope>
</reference>
<reference key="18">
    <citation type="journal article" date="2011" name="Nature">
        <title>Modulation of Rab GTPase function by a protein phosphocholine transferase.</title>
        <authorList>
            <person name="Mukherjee S."/>
            <person name="Liu X."/>
            <person name="Arasaki K."/>
            <person name="McDonough J."/>
            <person name="Galan J.E."/>
            <person name="Roy C.R."/>
        </authorList>
    </citation>
    <scope>INTERACTION WITH L.PNEUMOPHILA ANKX (MICROBIAL INFECTION)</scope>
    <scope>PHOSPHORYLATION AT SER-79 (MICROBIAL INFECTION)</scope>
</reference>
<reference key="19">
    <citation type="journal article" date="2011" name="Proc. Natl. Acad. Sci. U.S.A.">
        <title>Legionella pneumophila regulates the small GTPase Rab1 activity by reversible phosphorylcholination.</title>
        <authorList>
            <person name="Tan Y."/>
            <person name="Arnold R.J."/>
            <person name="Luo Z.Q."/>
        </authorList>
    </citation>
    <scope>INTERACTION WITH L.PNEUMOPHILA LEM3 (MICROBIAL INFECTION)</scope>
    <scope>PHOSPHORYLATION AT SER-79 (MICROBIAL INFECTION)</scope>
</reference>
<reference key="20">
    <citation type="journal article" date="2012" name="Mol. Cell. Proteomics">
        <title>Comparative large-scale characterisation of plant vs. mammal proteins reveals similar and idiosyncratic N-alpha acetylation features.</title>
        <authorList>
            <person name="Bienvenut W.V."/>
            <person name="Sumpton D."/>
            <person name="Martinez A."/>
            <person name="Lilla S."/>
            <person name="Espagne C."/>
            <person name="Meinnel T."/>
            <person name="Giglione C."/>
        </authorList>
    </citation>
    <scope>ACETYLATION [LARGE SCALE ANALYSIS] AT SER-2</scope>
    <scope>CLEAVAGE OF INITIATOR METHIONINE [LARGE SCALE ANALYSIS]</scope>
    <scope>IDENTIFICATION BY MASS SPECTROMETRY [LARGE SCALE ANALYSIS]</scope>
</reference>
<reference key="21">
    <citation type="journal article" date="2013" name="J. Proteome Res.">
        <title>Toward a comprehensive characterization of a human cancer cell phosphoproteome.</title>
        <authorList>
            <person name="Zhou H."/>
            <person name="Di Palma S."/>
            <person name="Preisinger C."/>
            <person name="Peng M."/>
            <person name="Polat A.N."/>
            <person name="Heck A.J."/>
            <person name="Mohammed S."/>
        </authorList>
    </citation>
    <scope>IDENTIFICATION BY MASS SPECTROMETRY [LARGE SCALE ANALYSIS]</scope>
    <source>
        <tissue>Erythroleukemia</tissue>
    </source>
</reference>
<reference key="22">
    <citation type="journal article" date="2013" name="Mol. Membr. Biol.">
        <title>Rab1a and Rab5a preferentially bind to binary lipid compositions with higher stored curvature elastic energy.</title>
        <authorList>
            <person name="Kirsten M.L."/>
            <person name="Baron R.A."/>
            <person name="Seabra M.C."/>
            <person name="Ces O."/>
        </authorList>
    </citation>
    <scope>SUBCELLULAR LOCATION</scope>
    <scope>INTERACTION WITH GDI1</scope>
</reference>
<reference key="23">
    <citation type="journal article" date="2015" name="J. Biol. Chem.">
        <title>Small GTPase Rab2B and Its Specific Binding Protein Golgi-associated Rab2B Interactor-like 4 (GARI-L4) Regulate Golgi Morphology.</title>
        <authorList>
            <person name="Aizawa M."/>
            <person name="Fukuda M."/>
        </authorList>
    </citation>
    <scope>FUNCTION</scope>
</reference>
<reference key="24">
    <citation type="journal article" date="2015" name="Proteomics">
        <title>N-terminome analysis of the human mitochondrial proteome.</title>
        <authorList>
            <person name="Vaca Jacome A.S."/>
            <person name="Rabilloud T."/>
            <person name="Schaeffer-Reiss C."/>
            <person name="Rompais M."/>
            <person name="Ayoub D."/>
            <person name="Lane L."/>
            <person name="Bairoch A."/>
            <person name="Van Dorsselaer A."/>
            <person name="Carapito C."/>
        </authorList>
    </citation>
    <scope>IDENTIFICATION BY MASS SPECTROMETRY [LARGE SCALE ANALYSIS]</scope>
</reference>
<reference key="25">
    <citation type="journal article" date="2016" name="EMBO J.">
        <title>The C9orf72 protein interacts with Rab1a and the ULK1 complex to regulate initiation of autophagy.</title>
        <authorList>
            <person name="Webster C.P."/>
            <person name="Smith E.F."/>
            <person name="Bauer C.S."/>
            <person name="Moller A."/>
            <person name="Hautbergue G.M."/>
            <person name="Ferraiuolo L."/>
            <person name="Myszczynska M.A."/>
            <person name="Higginbottom A."/>
            <person name="Walsh M.J."/>
            <person name="Whitworth A.J."/>
            <person name="Kaspar B.K."/>
            <person name="Meyer K."/>
            <person name="Shaw P.J."/>
            <person name="Grierson A.J."/>
            <person name="De Vos K.J."/>
        </authorList>
    </citation>
    <scope>INTERACTION WITH C9ORF72</scope>
</reference>
<reference key="26">
    <citation type="journal article" date="2020" name="Commun. Biol.">
        <title>Arginine GlcNAcylation of Rab small GTPases by the pathogen Salmonella Typhimurium.</title>
        <authorList>
            <person name="Meng K."/>
            <person name="Zhuang X."/>
            <person name="Peng T."/>
            <person name="Hu S."/>
            <person name="Yang J."/>
            <person name="Wang Z."/>
            <person name="Fu J."/>
            <person name="Xue J."/>
            <person name="Pan X."/>
            <person name="Lv J."/>
            <person name="Liu X."/>
            <person name="Shao F."/>
            <person name="Li S."/>
        </authorList>
    </citation>
    <scope>GLYCOSYLATION AT ARG-72; ARG-74; ARG-82 AND ARG-111 (MICROBIAL INFECTION)</scope>
    <scope>MUTAGENESIS OF 72-ARG--ARG-74; ARG-82 AND ARG-111</scope>
</reference>
<reference key="27">
    <citation type="journal article" date="2020" name="Front. Cell. Infect. Microbiol.">
        <title>The Salmonella effector SseK3 targets small Rab GTPases.</title>
        <authorList>
            <person name="Gan J."/>
            <person name="Scott N.E."/>
            <person name="Newson J.P.M."/>
            <person name="Wibawa R.R."/>
            <person name="Wong Fok Lung T."/>
            <person name="Pollock G.L."/>
            <person name="Ng G.Z."/>
            <person name="van Driel I."/>
            <person name="Pearson J.S."/>
            <person name="Hartland E.L."/>
            <person name="Giogha C."/>
        </authorList>
    </citation>
    <scope>GLYCOSYLATION AT ARG-74; ARG-82 AND ARG-111 (MICROBIAL INFECTION)</scope>
    <scope>MUTAGENESIS OF ARG-74; ARG-82 AND ARG-111</scope>
</reference>
<reference key="28">
    <citation type="journal article" date="2022" name="Adv. Sci.">
        <title>RNF115 Inhibits the Post-ER Trafficking of TLRs and TLRs-Mediated Immune Responses by Catalyzing K11-Linked Ubiquitination of RAB1A and RAB13.</title>
        <authorList>
            <person name="Zhang Z.D."/>
            <person name="Li H.X."/>
            <person name="Gan H."/>
            <person name="Tang Z."/>
            <person name="Guo Y.Y."/>
            <person name="Yao S.Q."/>
            <person name="Liuyu T."/>
            <person name="Zhong B."/>
            <person name="Lin D."/>
        </authorList>
    </citation>
    <scope>FUNCTION</scope>
    <scope>UBIQUITINATION BY RNF115 AT LYS-49 AND LYS-61</scope>
    <scope>MUTAGENESIS OF LYS-49 AND LYS-61</scope>
</reference>
<reference evidence="33" key="29">
    <citation type="submission" date="2009-02" db="PDB data bank">
        <title>Crystal structure of human RAB1A in complex with GDP.</title>
        <authorList>
            <consortium name="Structural genomics consortium (SGC)"/>
        </authorList>
    </citation>
    <scope>X-RAY CRYSTALLOGRAPHY (2.63 ANGSTROMS) OF 6-177 IN COMPLEX WITH GDP AND MG(2+)</scope>
    <scope>COFACTOR</scope>
</reference>
<reference evidence="34" key="30">
    <citation type="journal article" date="2010" name="EMBO J.">
        <title>Structural insights into the dual nucleotide exchange and GDI displacement activity of SidM/DrrA.</title>
        <authorList>
            <person name="Suh H.Y."/>
            <person name="Lee D.W."/>
            <person name="Lee K.H."/>
            <person name="Ku B."/>
            <person name="Choi S.J."/>
            <person name="Woo J.S."/>
            <person name="Kim Y.G."/>
            <person name="Oh B.H."/>
        </authorList>
    </citation>
    <scope>X-RAY CRYSTALLOGRAPHY (1.50 ANGSTROMS) OF 4-178 OF MUTANT ILE-124 IN COMPLEX WITH L.PNEUMOPHILA DRRA</scope>
    <scope>GTP-BINDING</scope>
    <scope>SUBCELLULAR LOCATION</scope>
    <scope>INTERACTION WITH GDI1 AND L.PNEUMOPHILA DRRA (MICROBIAL INFECTION)</scope>
</reference>
<reference evidence="35" key="31">
    <citation type="journal article" date="2010" name="Proc. Natl. Acad. Sci. U.S.A.">
        <title>Structural mechanism of host Rab1 activation by the bifunctional Legionella type IV effector SidM/DrrA.</title>
        <authorList>
            <person name="Zhu Y."/>
            <person name="Hu L."/>
            <person name="Zhou Y."/>
            <person name="Yao Q."/>
            <person name="Liu L."/>
            <person name="Shao F."/>
        </authorList>
    </citation>
    <scope>X-RAY CRYSTALLOGRAPHY (2.85 ANGSTROMS) OF 1-177 IN COMPLEX WITH L.PNEUMOPHILA DRRA</scope>
    <scope>INTERACTION WITH GDI1 AND L.PNEUMOPHILA DRRA (MICROBIAL INFECTION)</scope>
</reference>
<reference evidence="38 39 40 41" key="32">
    <citation type="journal article" date="2012" name="Cell">
        <title>Structurally distinct bacterial TBC-like GAPs link Arf GTPase to Rab1 inactivation to counteract host defenses.</title>
        <authorList>
            <person name="Dong N."/>
            <person name="Zhu Y."/>
            <person name="Lu Q."/>
            <person name="Hu L."/>
            <person name="Zheng Y."/>
            <person name="Shao F."/>
        </authorList>
    </citation>
    <scope>X-RAY CRYSTALLOGRAPHY (2.80 ANGSTROMS) OF 6-176 IN COMPLEXES WITH GDP AND MG(2+); ARF6; E.COLI ESPG AND S.FLEXNERI VIRA</scope>
    <scope>FUNCTION</scope>
    <scope>CATALYTIC ACTIVITY</scope>
    <scope>SUBCELLULAR LOCATION</scope>
    <scope>IDENTIFICATION IN A COMPLEX WITH ARF6 AND E.COLI ESPG</scope>
    <scope>INTERACTION WITH E.COLI ESPG AND S.FLEXNERI VIRA</scope>
    <scope>COFACTOR</scope>
</reference>
<reference evidence="36 37" key="33">
    <citation type="journal article" date="2012" name="PLoS Pathog.">
        <title>Structural insights into a unique Legionella pneumophila effector LidA recognizing both GDP and GTP bound Rab1 in their active state.</title>
        <authorList>
            <person name="Cheng W."/>
            <person name="Yin K."/>
            <person name="Lu D."/>
            <person name="Li B."/>
            <person name="Zhu D."/>
            <person name="Chen Y."/>
            <person name="Zhang H."/>
            <person name="Xu S."/>
            <person name="Chai J."/>
            <person name="Gu L."/>
        </authorList>
    </citation>
    <scope>X-RAY CRYSTALLOGRAPHY (1.73 ANGSTROMS) OF 1-176 IN COMPLEXES WITH GTP; GDP; MG(2+) AND L.PNEUMOPHILA LIDA</scope>
    <scope>INTERACTION WITH L.PNEUMOPHILA LIDA</scope>
    <scope>COFACTOR</scope>
    <scope>DOMAIN</scope>
</reference>
<reference evidence="43" key="34">
    <citation type="journal article" date="2013" name="Cell Res.">
        <title>Structural analyses of Legionella LepB reveal a new GAP fold that catalytically mimics eukaryotic RasGAP.</title>
        <authorList>
            <person name="Yu Q."/>
            <person name="Hu L."/>
            <person name="Yao Q."/>
            <person name="Zhu Y."/>
            <person name="Dong N."/>
            <person name="Wang D.C."/>
            <person name="Shao F."/>
        </authorList>
    </citation>
    <scope>X-RAY CRYSTALLOGRAPHY (2.78 ANGSTROMS) OF 1-177 IN COMPLEX WITH GDP; MG(2+) AND L.DRANCOURTII LEPB</scope>
    <scope>INTERACTION WITH L.PNEUMOPHILA AND L.DRANCOURTII LEPB</scope>
    <scope>COFACTOR</scope>
</reference>
<reference evidence="42" key="35">
    <citation type="journal article" date="2013" name="J. Biol. Chem.">
        <title>The Legionella pneumophila GTPase activating protein LepB accelerates Rab1 deactivation by a non-canonical hydrolytic mechanism.</title>
        <authorList>
            <person name="Mishra A.K."/>
            <person name="Del Campo C.M."/>
            <person name="Collins R.E."/>
            <person name="Roy C.R."/>
            <person name="Lambright D.G."/>
        </authorList>
    </citation>
    <scope>X-RAY CRYSTALLOGRAPHY (3.20 ANGSTROMS) OF 4-177 IN COMPLEX WITH GDP; MG(2+) AND L.PNEUMOPHILA LEPB</scope>
    <scope>INTERACTION WITH L.PNEUMOPHILA LEPB</scope>
    <scope>COFACTOR</scope>
</reference>
<proteinExistence type="evidence at protein level"/>
<name>RAB1A_HUMAN</name>
<keyword id="KW-0002">3D-structure</keyword>
<keyword id="KW-0007">Acetylation</keyword>
<keyword id="KW-0025">Alternative splicing</keyword>
<keyword id="KW-0072">Autophagy</keyword>
<keyword id="KW-0963">Cytoplasm</keyword>
<keyword id="KW-0903">Direct protein sequencing</keyword>
<keyword id="KW-0256">Endoplasmic reticulum</keyword>
<keyword id="KW-0967">Endosome</keyword>
<keyword id="KW-0931">ER-Golgi transport</keyword>
<keyword id="KW-0325">Glycoprotein</keyword>
<keyword id="KW-0333">Golgi apparatus</keyword>
<keyword id="KW-0342">GTP-binding</keyword>
<keyword id="KW-0378">Hydrolase</keyword>
<keyword id="KW-1017">Isopeptide bond</keyword>
<keyword id="KW-0449">Lipoprotein</keyword>
<keyword id="KW-0460">Magnesium</keyword>
<keyword id="KW-0472">Membrane</keyword>
<keyword id="KW-0479">Metal-binding</keyword>
<keyword id="KW-0547">Nucleotide-binding</keyword>
<keyword id="KW-0597">Phosphoprotein</keyword>
<keyword id="KW-0636">Prenylation</keyword>
<keyword id="KW-0653">Protein transport</keyword>
<keyword id="KW-1267">Proteomics identification</keyword>
<keyword id="KW-1185">Reference proteome</keyword>
<keyword id="KW-0813">Transport</keyword>
<keyword id="KW-0832">Ubl conjugation</keyword>